<feature type="chain" id="PRO_0000087668" description="Mu-diguetoxin-Dc1c">
    <location>
        <begin position="1"/>
        <end position="61"/>
    </location>
</feature>
<feature type="disulfide bond" evidence="1">
    <location>
        <begin position="12"/>
        <end position="25"/>
    </location>
</feature>
<feature type="disulfide bond" evidence="1">
    <location>
        <begin position="19"/>
        <end position="39"/>
    </location>
</feature>
<feature type="disulfide bond" evidence="1">
    <location>
        <begin position="24"/>
        <end position="53"/>
    </location>
</feature>
<proteinExistence type="evidence at protein level"/>
<protein>
    <recommendedName>
        <fullName>Mu-diguetoxin-Dc1c</fullName>
        <shortName>Mu-DGTX-Dc1c</shortName>
    </recommendedName>
    <alternativeName>
        <fullName evidence="3">Insecticidal toxin DTX12</fullName>
    </alternativeName>
</protein>
<reference key="1">
    <citation type="journal article" date="1995" name="Insect Biochem. Mol. Biol.">
        <title>Characterization and cloning of insecticidal peptides from the primitive weaving spider Diguetia canities.</title>
        <authorList>
            <person name="Krapcho K.J."/>
            <person name="Kral R.M. Jr."/>
            <person name="Vanwagenen B.C."/>
            <person name="Eppler K.G."/>
            <person name="Morgan T.K."/>
        </authorList>
    </citation>
    <scope>PROTEIN SEQUENCE</scope>
    <scope>MASS SPECTROMETRY</scope>
    <scope>TOXIC DOSE</scope>
    <source>
        <tissue>Venom</tissue>
    </source>
</reference>
<keyword id="KW-0903">Direct protein sequencing</keyword>
<keyword id="KW-1015">Disulfide bond</keyword>
<keyword id="KW-0872">Ion channel impairing toxin</keyword>
<keyword id="KW-0960">Knottin</keyword>
<keyword id="KW-0528">Neurotoxin</keyword>
<keyword id="KW-0638">Presynaptic neurotoxin</keyword>
<keyword id="KW-0964">Secreted</keyword>
<keyword id="KW-0800">Toxin</keyword>
<keyword id="KW-0738">Voltage-gated sodium channel impairing toxin</keyword>
<accession>P55817</accession>
<name>TXI12_DIGCA</name>
<comment type="function">
    <text>Acts by delaying the inactivation of presynaptic voltage-sensitive sodium channels (Nav). Acts against insects and causes a progressive spastic paralysis.</text>
</comment>
<comment type="subcellular location">
    <subcellularLocation>
        <location>Secreted</location>
    </subcellularLocation>
</comment>
<comment type="tissue specificity">
    <text>Expressed by the venom gland.</text>
</comment>
<comment type="domain">
    <text evidence="4">The presence of a 'disulfide through disulfide knot' structurally defines this protein as a knottin.</text>
</comment>
<comment type="mass spectrometry" mass="7080.0" error="2.0" method="FAB" evidence="2"/>
<comment type="toxic dose">
    <text evidence="2">PD(50) is 3.19 nmol/g in lepidopteran larvae.</text>
</comment>
<comment type="similarity">
    <text evidence="4">Belongs to the neurotoxin 26 (DTX) family.</text>
</comment>
<organism>
    <name type="scientific">Diguetia canities</name>
    <name type="common">Desert bush spider</name>
    <name type="synonym">Segestria canities</name>
    <dbReference type="NCBI Taxonomy" id="38407"/>
    <lineage>
        <taxon>Eukaryota</taxon>
        <taxon>Metazoa</taxon>
        <taxon>Ecdysozoa</taxon>
        <taxon>Arthropoda</taxon>
        <taxon>Chelicerata</taxon>
        <taxon>Arachnida</taxon>
        <taxon>Araneae</taxon>
        <taxon>Araneomorphae</taxon>
        <taxon>Haplogynae</taxon>
        <taxon>Pholcoidea</taxon>
        <taxon>Diguetidae</taxon>
        <taxon>Diguetia</taxon>
    </lineage>
</organism>
<sequence length="61" mass="6975">AKDGDFEGPPGCLKMGELCKGGTCCTKVYKYWKWRKLECLGKNDGWFKKKFICDEPCNPXX</sequence>
<dbReference type="TCDB" id="8.B.30.1.3">
    <property type="family name" value="the diguetoxin (diguetoxin) family"/>
</dbReference>
<dbReference type="ArachnoServer" id="AS000348">
    <property type="toxin name" value="mu-diguetoxin-Dc1c"/>
</dbReference>
<dbReference type="GO" id="GO:0005576">
    <property type="term" value="C:extracellular region"/>
    <property type="evidence" value="ECO:0007669"/>
    <property type="project" value="UniProtKB-SubCell"/>
</dbReference>
<dbReference type="GO" id="GO:0044231">
    <property type="term" value="C:host cell presynaptic membrane"/>
    <property type="evidence" value="ECO:0007669"/>
    <property type="project" value="UniProtKB-KW"/>
</dbReference>
<dbReference type="GO" id="GO:0017080">
    <property type="term" value="F:sodium channel regulator activity"/>
    <property type="evidence" value="ECO:0007669"/>
    <property type="project" value="UniProtKB-KW"/>
</dbReference>
<dbReference type="GO" id="GO:0090729">
    <property type="term" value="F:toxin activity"/>
    <property type="evidence" value="ECO:0007669"/>
    <property type="project" value="UniProtKB-KW"/>
</dbReference>
<dbReference type="Gene3D" id="2.30.130.120">
    <property type="match status" value="1"/>
</dbReference>
<dbReference type="InterPro" id="IPR035290">
    <property type="entry name" value="Beta/Mu-DGTX-Dc1"/>
</dbReference>
<dbReference type="Pfam" id="PF17491">
    <property type="entry name" value="m_DGTX_Dc1a_b_c"/>
    <property type="match status" value="1"/>
</dbReference>
<evidence type="ECO:0000250" key="1">
    <source>
        <dbReference type="UniProtKB" id="P49126"/>
    </source>
</evidence>
<evidence type="ECO:0000269" key="2">
    <source>
    </source>
</evidence>
<evidence type="ECO:0000303" key="3">
    <source>
    </source>
</evidence>
<evidence type="ECO:0000305" key="4"/>